<reference key="1">
    <citation type="journal article" date="2003" name="Nature">
        <title>Genome sequence of Bacillus cereus and comparative analysis with Bacillus anthracis.</title>
        <authorList>
            <person name="Ivanova N."/>
            <person name="Sorokin A."/>
            <person name="Anderson I."/>
            <person name="Galleron N."/>
            <person name="Candelon B."/>
            <person name="Kapatral V."/>
            <person name="Bhattacharyya A."/>
            <person name="Reznik G."/>
            <person name="Mikhailova N."/>
            <person name="Lapidus A."/>
            <person name="Chu L."/>
            <person name="Mazur M."/>
            <person name="Goltsman E."/>
            <person name="Larsen N."/>
            <person name="D'Souza M."/>
            <person name="Walunas T."/>
            <person name="Grechkin Y."/>
            <person name="Pusch G."/>
            <person name="Haselkorn R."/>
            <person name="Fonstein M."/>
            <person name="Ehrlich S.D."/>
            <person name="Overbeek R."/>
            <person name="Kyrpides N.C."/>
        </authorList>
    </citation>
    <scope>NUCLEOTIDE SEQUENCE [LARGE SCALE GENOMIC DNA]</scope>
    <source>
        <strain>ATCC 14579 / DSM 31 / CCUG 7414 / JCM 2152 / NBRC 15305 / NCIMB 9373 / NCTC 2599 / NRRL B-3711</strain>
    </source>
</reference>
<accession>Q815V9</accession>
<feature type="signal peptide" evidence="1">
    <location>
        <begin position="1"/>
        <end position="22"/>
    </location>
</feature>
<feature type="chain" id="PRO_0000020374" description="Membrane protein insertase YidC 1">
    <location>
        <begin position="23"/>
        <end position="260"/>
    </location>
</feature>
<feature type="transmembrane region" description="Helical" evidence="1">
    <location>
        <begin position="29"/>
        <end position="49"/>
    </location>
</feature>
<feature type="transmembrane region" description="Helical" evidence="1">
    <location>
        <begin position="52"/>
        <end position="72"/>
    </location>
</feature>
<feature type="transmembrane region" description="Helical" evidence="1">
    <location>
        <begin position="133"/>
        <end position="153"/>
    </location>
</feature>
<feature type="transmembrane region" description="Helical" evidence="1">
    <location>
        <begin position="164"/>
        <end position="184"/>
    </location>
</feature>
<feature type="transmembrane region" description="Helical" evidence="1">
    <location>
        <begin position="213"/>
        <end position="233"/>
    </location>
</feature>
<feature type="lipid moiety-binding region" description="N-palmitoyl cysteine" evidence="1">
    <location>
        <position position="23"/>
    </location>
</feature>
<feature type="lipid moiety-binding region" description="S-diacylglycerol cysteine" evidence="1">
    <location>
        <position position="23"/>
    </location>
</feature>
<keyword id="KW-1003">Cell membrane</keyword>
<keyword id="KW-0143">Chaperone</keyword>
<keyword id="KW-0449">Lipoprotein</keyword>
<keyword id="KW-0472">Membrane</keyword>
<keyword id="KW-0564">Palmitate</keyword>
<keyword id="KW-0653">Protein transport</keyword>
<keyword id="KW-1185">Reference proteome</keyword>
<keyword id="KW-0732">Signal</keyword>
<keyword id="KW-0812">Transmembrane</keyword>
<keyword id="KW-1133">Transmembrane helix</keyword>
<keyword id="KW-0813">Transport</keyword>
<gene>
    <name evidence="1" type="primary">yidC1</name>
    <name type="ordered locus">BC_5016</name>
</gene>
<dbReference type="EMBL" id="AE016877">
    <property type="protein sequence ID" value="AAP11888.1"/>
    <property type="molecule type" value="Genomic_DNA"/>
</dbReference>
<dbReference type="RefSeq" id="NP_834687.1">
    <property type="nucleotide sequence ID" value="NC_004722.1"/>
</dbReference>
<dbReference type="SMR" id="Q815V9"/>
<dbReference type="STRING" id="226900.BC_5016"/>
<dbReference type="KEGG" id="bce:BC5016"/>
<dbReference type="PATRIC" id="fig|226900.8.peg.5169"/>
<dbReference type="HOGENOM" id="CLU_036138_5_0_9"/>
<dbReference type="OrthoDB" id="9780552at2"/>
<dbReference type="Proteomes" id="UP000001417">
    <property type="component" value="Chromosome"/>
</dbReference>
<dbReference type="GO" id="GO:0005886">
    <property type="term" value="C:plasma membrane"/>
    <property type="evidence" value="ECO:0000318"/>
    <property type="project" value="GO_Central"/>
</dbReference>
<dbReference type="GO" id="GO:0032977">
    <property type="term" value="F:membrane insertase activity"/>
    <property type="evidence" value="ECO:0000318"/>
    <property type="project" value="GO_Central"/>
</dbReference>
<dbReference type="GO" id="GO:0051205">
    <property type="term" value="P:protein insertion into membrane"/>
    <property type="evidence" value="ECO:0000318"/>
    <property type="project" value="GO_Central"/>
</dbReference>
<dbReference type="GO" id="GO:0015031">
    <property type="term" value="P:protein transport"/>
    <property type="evidence" value="ECO:0007669"/>
    <property type="project" value="UniProtKB-KW"/>
</dbReference>
<dbReference type="CDD" id="cd20070">
    <property type="entry name" value="5TM_YidC_Alb3"/>
    <property type="match status" value="1"/>
</dbReference>
<dbReference type="HAMAP" id="MF_01811">
    <property type="entry name" value="YidC_type2"/>
    <property type="match status" value="1"/>
</dbReference>
<dbReference type="InterPro" id="IPR001708">
    <property type="entry name" value="YidC/ALB3/OXA1/COX18"/>
</dbReference>
<dbReference type="InterPro" id="IPR028055">
    <property type="entry name" value="YidC/Oxa/ALB_C"/>
</dbReference>
<dbReference type="InterPro" id="IPR023060">
    <property type="entry name" value="YidC/YidC1/YidC2_Firmicutes"/>
</dbReference>
<dbReference type="InterPro" id="IPR047196">
    <property type="entry name" value="YidC_ALB_C"/>
</dbReference>
<dbReference type="NCBIfam" id="TIGR03592">
    <property type="entry name" value="yidC_oxa1_cterm"/>
    <property type="match status" value="1"/>
</dbReference>
<dbReference type="PANTHER" id="PTHR12428:SF65">
    <property type="entry name" value="CYTOCHROME C OXIDASE ASSEMBLY PROTEIN COX18, MITOCHONDRIAL"/>
    <property type="match status" value="1"/>
</dbReference>
<dbReference type="PANTHER" id="PTHR12428">
    <property type="entry name" value="OXA1"/>
    <property type="match status" value="1"/>
</dbReference>
<dbReference type="Pfam" id="PF02096">
    <property type="entry name" value="60KD_IMP"/>
    <property type="match status" value="1"/>
</dbReference>
<dbReference type="PRINTS" id="PR00701">
    <property type="entry name" value="60KDINNERMP"/>
</dbReference>
<dbReference type="PROSITE" id="PS51257">
    <property type="entry name" value="PROKAR_LIPOPROTEIN"/>
    <property type="match status" value="1"/>
</dbReference>
<sequence>MLKSYRAVLVSLSLLFVFVLSGCSNAAPIDAHSTGIWDHYFVYPISFMIQFVAHHIPGASFGIAIIIMTLVIRSAMIPLAVSQYRSQAKMKKMQPELQKLKKKYGDVSKDLEKQKQYQKEMSELMKSGGWNPLAGCWPLLIQMPIFSALYYAISRTEEIRTSSFLWVNLGHADPYHILPIIAALTTFIQMKVFQSNITPGEQVQMLKMQQIMMPAMILFMGFAAPSGLVLYWITGNLFTMTQTIVLRKIMEREELQLQKA</sequence>
<proteinExistence type="inferred from homology"/>
<name>YIDC1_BACCR</name>
<protein>
    <recommendedName>
        <fullName evidence="1">Membrane protein insertase YidC 1</fullName>
    </recommendedName>
    <alternativeName>
        <fullName evidence="1">Foldase YidC 1</fullName>
    </alternativeName>
    <alternativeName>
        <fullName evidence="1">Membrane integrase YidC 1</fullName>
    </alternativeName>
    <alternativeName>
        <fullName evidence="1">Membrane protein YidC 1</fullName>
    </alternativeName>
</protein>
<organism>
    <name type="scientific">Bacillus cereus (strain ATCC 14579 / DSM 31 / CCUG 7414 / JCM 2152 / NBRC 15305 / NCIMB 9373 / NCTC 2599 / NRRL B-3711)</name>
    <dbReference type="NCBI Taxonomy" id="226900"/>
    <lineage>
        <taxon>Bacteria</taxon>
        <taxon>Bacillati</taxon>
        <taxon>Bacillota</taxon>
        <taxon>Bacilli</taxon>
        <taxon>Bacillales</taxon>
        <taxon>Bacillaceae</taxon>
        <taxon>Bacillus</taxon>
        <taxon>Bacillus cereus group</taxon>
    </lineage>
</organism>
<evidence type="ECO:0000255" key="1">
    <source>
        <dbReference type="HAMAP-Rule" id="MF_01811"/>
    </source>
</evidence>
<comment type="function">
    <text evidence="1">Required for the insertion and/or proper folding and/or complex formation of integral membrane proteins into the membrane. Involved in integration of membrane proteins that insert both dependently and independently of the Sec translocase complex, as well as at least some lipoproteins.</text>
</comment>
<comment type="subcellular location">
    <subcellularLocation>
        <location evidence="1">Cell membrane</location>
        <topology evidence="1">Multi-pass membrane protein</topology>
    </subcellularLocation>
</comment>
<comment type="similarity">
    <text evidence="1">Belongs to the OXA1/ALB3/YidC family. Type 2 subfamily.</text>
</comment>